<proteinExistence type="inferred from homology"/>
<feature type="chain" id="PRO_1000013390" description="Large ribosomal subunit protein bL34">
    <location>
        <begin position="1"/>
        <end position="45"/>
    </location>
</feature>
<evidence type="ECO:0000255" key="1">
    <source>
        <dbReference type="HAMAP-Rule" id="MF_00391"/>
    </source>
</evidence>
<evidence type="ECO:0000305" key="2"/>
<organism>
    <name type="scientific">Nocardioides sp. (strain ATCC BAA-499 / JS614)</name>
    <dbReference type="NCBI Taxonomy" id="196162"/>
    <lineage>
        <taxon>Bacteria</taxon>
        <taxon>Bacillati</taxon>
        <taxon>Actinomycetota</taxon>
        <taxon>Actinomycetes</taxon>
        <taxon>Propionibacteriales</taxon>
        <taxon>Nocardioidaceae</taxon>
        <taxon>Nocardioides</taxon>
    </lineage>
</organism>
<protein>
    <recommendedName>
        <fullName evidence="1">Large ribosomal subunit protein bL34</fullName>
    </recommendedName>
    <alternativeName>
        <fullName evidence="2">50S ribosomal protein L34</fullName>
    </alternativeName>
</protein>
<reference key="1">
    <citation type="submission" date="2006-12" db="EMBL/GenBank/DDBJ databases">
        <title>Complete sequence of chromosome 1 of Nocardioides sp. JS614.</title>
        <authorList>
            <person name="Copeland A."/>
            <person name="Lucas S."/>
            <person name="Lapidus A."/>
            <person name="Barry K."/>
            <person name="Detter J.C."/>
            <person name="Glavina del Rio T."/>
            <person name="Hammon N."/>
            <person name="Israni S."/>
            <person name="Dalin E."/>
            <person name="Tice H."/>
            <person name="Pitluck S."/>
            <person name="Thompson L.S."/>
            <person name="Brettin T."/>
            <person name="Bruce D."/>
            <person name="Han C."/>
            <person name="Tapia R."/>
            <person name="Schmutz J."/>
            <person name="Larimer F."/>
            <person name="Land M."/>
            <person name="Hauser L."/>
            <person name="Kyrpides N."/>
            <person name="Kim E."/>
            <person name="Mattes T."/>
            <person name="Gossett J."/>
            <person name="Richardson P."/>
        </authorList>
    </citation>
    <scope>NUCLEOTIDE SEQUENCE [LARGE SCALE GENOMIC DNA]</scope>
    <source>
        <strain>ATCC BAA-499 / JS614</strain>
    </source>
</reference>
<comment type="similarity">
    <text evidence="1">Belongs to the bacterial ribosomal protein bL34 family.</text>
</comment>
<dbReference type="EMBL" id="CP000509">
    <property type="protein sequence ID" value="ABL84195.1"/>
    <property type="molecule type" value="Genomic_DNA"/>
</dbReference>
<dbReference type="RefSeq" id="WP_011758123.1">
    <property type="nucleotide sequence ID" value="NC_008699.1"/>
</dbReference>
<dbReference type="SMR" id="A1SQW0"/>
<dbReference type="STRING" id="196162.Noca_4700"/>
<dbReference type="KEGG" id="nca:Noca_4700"/>
<dbReference type="eggNOG" id="COG0230">
    <property type="taxonomic scope" value="Bacteria"/>
</dbReference>
<dbReference type="HOGENOM" id="CLU_129938_2_1_11"/>
<dbReference type="OrthoDB" id="9804832at2"/>
<dbReference type="Proteomes" id="UP000000640">
    <property type="component" value="Chromosome"/>
</dbReference>
<dbReference type="GO" id="GO:1990904">
    <property type="term" value="C:ribonucleoprotein complex"/>
    <property type="evidence" value="ECO:0007669"/>
    <property type="project" value="UniProtKB-KW"/>
</dbReference>
<dbReference type="GO" id="GO:0005840">
    <property type="term" value="C:ribosome"/>
    <property type="evidence" value="ECO:0007669"/>
    <property type="project" value="UniProtKB-KW"/>
</dbReference>
<dbReference type="GO" id="GO:0003735">
    <property type="term" value="F:structural constituent of ribosome"/>
    <property type="evidence" value="ECO:0007669"/>
    <property type="project" value="InterPro"/>
</dbReference>
<dbReference type="GO" id="GO:0006412">
    <property type="term" value="P:translation"/>
    <property type="evidence" value="ECO:0007669"/>
    <property type="project" value="UniProtKB-UniRule"/>
</dbReference>
<dbReference type="FunFam" id="1.10.287.3980:FF:000001">
    <property type="entry name" value="Mitochondrial ribosomal protein L34"/>
    <property type="match status" value="1"/>
</dbReference>
<dbReference type="Gene3D" id="1.10.287.3980">
    <property type="match status" value="1"/>
</dbReference>
<dbReference type="HAMAP" id="MF_00391">
    <property type="entry name" value="Ribosomal_bL34"/>
    <property type="match status" value="1"/>
</dbReference>
<dbReference type="InterPro" id="IPR000271">
    <property type="entry name" value="Ribosomal_bL34"/>
</dbReference>
<dbReference type="InterPro" id="IPR020939">
    <property type="entry name" value="Ribosomal_bL34_CS"/>
</dbReference>
<dbReference type="NCBIfam" id="TIGR01030">
    <property type="entry name" value="rpmH_bact"/>
    <property type="match status" value="1"/>
</dbReference>
<dbReference type="PANTHER" id="PTHR14503:SF4">
    <property type="entry name" value="LARGE RIBOSOMAL SUBUNIT PROTEIN BL34M"/>
    <property type="match status" value="1"/>
</dbReference>
<dbReference type="PANTHER" id="PTHR14503">
    <property type="entry name" value="MITOCHONDRIAL RIBOSOMAL PROTEIN 34 FAMILY MEMBER"/>
    <property type="match status" value="1"/>
</dbReference>
<dbReference type="Pfam" id="PF00468">
    <property type="entry name" value="Ribosomal_L34"/>
    <property type="match status" value="1"/>
</dbReference>
<dbReference type="PROSITE" id="PS00784">
    <property type="entry name" value="RIBOSOMAL_L34"/>
    <property type="match status" value="1"/>
</dbReference>
<name>RL34_NOCSJ</name>
<accession>A1SQW0</accession>
<gene>
    <name evidence="1" type="primary">rpmH</name>
    <name type="ordered locus">Noca_4700</name>
</gene>
<keyword id="KW-1185">Reference proteome</keyword>
<keyword id="KW-0687">Ribonucleoprotein</keyword>
<keyword id="KW-0689">Ribosomal protein</keyword>
<sequence>MSKRTYQPNNRRRHKVHGFRLRMRTRAGRAILSSRRRKGRKSLAV</sequence>